<gene>
    <name type="primary">rnhB</name>
    <name type="ordered locus">Rv2902c</name>
    <name type="ORF">MTCY274.33c</name>
</gene>
<protein>
    <recommendedName>
        <fullName>Ribonuclease HII</fullName>
        <shortName>RNase HII</shortName>
        <ecNumber>3.1.26.4</ecNumber>
    </recommendedName>
</protein>
<dbReference type="EC" id="3.1.26.4"/>
<dbReference type="EMBL" id="AL123456">
    <property type="protein sequence ID" value="CCP45704.1"/>
    <property type="molecule type" value="Genomic_DNA"/>
</dbReference>
<dbReference type="PIR" id="A70927">
    <property type="entry name" value="A70927"/>
</dbReference>
<dbReference type="RefSeq" id="NP_217418.1">
    <property type="nucleotide sequence ID" value="NC_000962.3"/>
</dbReference>
<dbReference type="RefSeq" id="WP_003414713.1">
    <property type="nucleotide sequence ID" value="NZ_NVQJ01000006.1"/>
</dbReference>
<dbReference type="SMR" id="P9WH01"/>
<dbReference type="FunCoup" id="P9WH01">
    <property type="interactions" value="210"/>
</dbReference>
<dbReference type="STRING" id="83332.Rv2902c"/>
<dbReference type="PaxDb" id="83332-Rv2902c"/>
<dbReference type="DNASU" id="888504"/>
<dbReference type="GeneID" id="888504"/>
<dbReference type="KEGG" id="mtu:Rv2902c"/>
<dbReference type="KEGG" id="mtv:RVBD_2902c"/>
<dbReference type="TubercuList" id="Rv2902c"/>
<dbReference type="eggNOG" id="COG0164">
    <property type="taxonomic scope" value="Bacteria"/>
</dbReference>
<dbReference type="InParanoid" id="P9WH01"/>
<dbReference type="OrthoDB" id="9803420at2"/>
<dbReference type="PhylomeDB" id="P9WH01"/>
<dbReference type="Proteomes" id="UP000001584">
    <property type="component" value="Chromosome"/>
</dbReference>
<dbReference type="GO" id="GO:0005737">
    <property type="term" value="C:cytoplasm"/>
    <property type="evidence" value="ECO:0007669"/>
    <property type="project" value="UniProtKB-SubCell"/>
</dbReference>
<dbReference type="GO" id="GO:0032299">
    <property type="term" value="C:ribonuclease H2 complex"/>
    <property type="evidence" value="ECO:0000318"/>
    <property type="project" value="GO_Central"/>
</dbReference>
<dbReference type="GO" id="GO:0030145">
    <property type="term" value="F:manganese ion binding"/>
    <property type="evidence" value="ECO:0007669"/>
    <property type="project" value="UniProtKB-UniRule"/>
</dbReference>
<dbReference type="GO" id="GO:0003723">
    <property type="term" value="F:RNA binding"/>
    <property type="evidence" value="ECO:0007669"/>
    <property type="project" value="InterPro"/>
</dbReference>
<dbReference type="GO" id="GO:0004523">
    <property type="term" value="F:RNA-DNA hybrid ribonuclease activity"/>
    <property type="evidence" value="ECO:0000318"/>
    <property type="project" value="GO_Central"/>
</dbReference>
<dbReference type="GO" id="GO:0043137">
    <property type="term" value="P:DNA replication, removal of RNA primer"/>
    <property type="evidence" value="ECO:0000318"/>
    <property type="project" value="GO_Central"/>
</dbReference>
<dbReference type="GO" id="GO:0006298">
    <property type="term" value="P:mismatch repair"/>
    <property type="evidence" value="ECO:0000318"/>
    <property type="project" value="GO_Central"/>
</dbReference>
<dbReference type="CDD" id="cd07182">
    <property type="entry name" value="RNase_HII_bacteria_HII_like"/>
    <property type="match status" value="1"/>
</dbReference>
<dbReference type="FunFam" id="3.30.420.10:FF:000113">
    <property type="entry name" value="Ribonuclease HII"/>
    <property type="match status" value="1"/>
</dbReference>
<dbReference type="Gene3D" id="3.30.420.10">
    <property type="entry name" value="Ribonuclease H-like superfamily/Ribonuclease H"/>
    <property type="match status" value="1"/>
</dbReference>
<dbReference type="HAMAP" id="MF_00052_B">
    <property type="entry name" value="RNase_HII_B"/>
    <property type="match status" value="1"/>
</dbReference>
<dbReference type="InterPro" id="IPR022898">
    <property type="entry name" value="RNase_HII"/>
</dbReference>
<dbReference type="InterPro" id="IPR001352">
    <property type="entry name" value="RNase_HII/HIII"/>
</dbReference>
<dbReference type="InterPro" id="IPR024567">
    <property type="entry name" value="RNase_HII/HIII_dom"/>
</dbReference>
<dbReference type="InterPro" id="IPR012337">
    <property type="entry name" value="RNaseH-like_sf"/>
</dbReference>
<dbReference type="InterPro" id="IPR036397">
    <property type="entry name" value="RNaseH_sf"/>
</dbReference>
<dbReference type="NCBIfam" id="NF000595">
    <property type="entry name" value="PRK00015.1-3"/>
    <property type="match status" value="1"/>
</dbReference>
<dbReference type="NCBIfam" id="NF000598">
    <property type="entry name" value="PRK00015.2-2"/>
    <property type="match status" value="1"/>
</dbReference>
<dbReference type="NCBIfam" id="NF000600">
    <property type="entry name" value="PRK00015.2-4"/>
    <property type="match status" value="1"/>
</dbReference>
<dbReference type="PANTHER" id="PTHR10954">
    <property type="entry name" value="RIBONUCLEASE H2 SUBUNIT A"/>
    <property type="match status" value="1"/>
</dbReference>
<dbReference type="PANTHER" id="PTHR10954:SF18">
    <property type="entry name" value="RIBONUCLEASE HII"/>
    <property type="match status" value="1"/>
</dbReference>
<dbReference type="Pfam" id="PF01351">
    <property type="entry name" value="RNase_HII"/>
    <property type="match status" value="1"/>
</dbReference>
<dbReference type="SUPFAM" id="SSF53098">
    <property type="entry name" value="Ribonuclease H-like"/>
    <property type="match status" value="1"/>
</dbReference>
<dbReference type="PROSITE" id="PS51975">
    <property type="entry name" value="RNASE_H_2"/>
    <property type="match status" value="1"/>
</dbReference>
<keyword id="KW-0963">Cytoplasm</keyword>
<keyword id="KW-0255">Endonuclease</keyword>
<keyword id="KW-0378">Hydrolase</keyword>
<keyword id="KW-0464">Manganese</keyword>
<keyword id="KW-0479">Metal-binding</keyword>
<keyword id="KW-0540">Nuclease</keyword>
<keyword id="KW-1185">Reference proteome</keyword>
<sequence>MTKTWPPRTVIRKSGGLRGMRTLESALHRGGLGPVAGVDEVGRGACAGPLVVAACVLGPGRIASLAALDDSKKLSEQAREKLFPLICRYAVAYHVVFIPSAEVDRRGVHVANIEGMRRAVAGLAVRPGYVLSDGFRVPGLPMPSLPVIGGDAAAACIAAASVLAKVSRDRVMVALDADHPGYGFAEHKGYSTPAHSRALARLGPCPQHRYSFINVRRVASGSNTAEVADGQPDPRDGTAQTGEGRWSKSSHPATMRATGRAQGT</sequence>
<feature type="chain" id="PRO_0000111592" description="Ribonuclease HII">
    <location>
        <begin position="1"/>
        <end position="264"/>
    </location>
</feature>
<feature type="domain" description="RNase H type-2" evidence="2">
    <location>
        <begin position="33"/>
        <end position="224"/>
    </location>
</feature>
<feature type="region of interest" description="Disordered" evidence="3">
    <location>
        <begin position="222"/>
        <end position="264"/>
    </location>
</feature>
<feature type="binding site" evidence="1">
    <location>
        <position position="39"/>
    </location>
    <ligand>
        <name>a divalent metal cation</name>
        <dbReference type="ChEBI" id="CHEBI:60240"/>
    </ligand>
</feature>
<feature type="binding site" evidence="1">
    <location>
        <position position="40"/>
    </location>
    <ligand>
        <name>a divalent metal cation</name>
        <dbReference type="ChEBI" id="CHEBI:60240"/>
    </ligand>
</feature>
<feature type="binding site" evidence="1">
    <location>
        <position position="133"/>
    </location>
    <ligand>
        <name>a divalent metal cation</name>
        <dbReference type="ChEBI" id="CHEBI:60240"/>
    </ligand>
</feature>
<proteinExistence type="evidence at protein level"/>
<evidence type="ECO:0000250" key="1"/>
<evidence type="ECO:0000255" key="2">
    <source>
        <dbReference type="PROSITE-ProRule" id="PRU01319"/>
    </source>
</evidence>
<evidence type="ECO:0000256" key="3">
    <source>
        <dbReference type="SAM" id="MobiDB-lite"/>
    </source>
</evidence>
<evidence type="ECO:0000305" key="4"/>
<reference key="1">
    <citation type="journal article" date="1998" name="Nature">
        <title>Deciphering the biology of Mycobacterium tuberculosis from the complete genome sequence.</title>
        <authorList>
            <person name="Cole S.T."/>
            <person name="Brosch R."/>
            <person name="Parkhill J."/>
            <person name="Garnier T."/>
            <person name="Churcher C.M."/>
            <person name="Harris D.E."/>
            <person name="Gordon S.V."/>
            <person name="Eiglmeier K."/>
            <person name="Gas S."/>
            <person name="Barry C.E. III"/>
            <person name="Tekaia F."/>
            <person name="Badcock K."/>
            <person name="Basham D."/>
            <person name="Brown D."/>
            <person name="Chillingworth T."/>
            <person name="Connor R."/>
            <person name="Davies R.M."/>
            <person name="Devlin K."/>
            <person name="Feltwell T."/>
            <person name="Gentles S."/>
            <person name="Hamlin N."/>
            <person name="Holroyd S."/>
            <person name="Hornsby T."/>
            <person name="Jagels K."/>
            <person name="Krogh A."/>
            <person name="McLean J."/>
            <person name="Moule S."/>
            <person name="Murphy L.D."/>
            <person name="Oliver S."/>
            <person name="Osborne J."/>
            <person name="Quail M.A."/>
            <person name="Rajandream M.A."/>
            <person name="Rogers J."/>
            <person name="Rutter S."/>
            <person name="Seeger K."/>
            <person name="Skelton S."/>
            <person name="Squares S."/>
            <person name="Squares R."/>
            <person name="Sulston J.E."/>
            <person name="Taylor K."/>
            <person name="Whitehead S."/>
            <person name="Barrell B.G."/>
        </authorList>
    </citation>
    <scope>NUCLEOTIDE SEQUENCE [LARGE SCALE GENOMIC DNA]</scope>
    <source>
        <strain>ATCC 25618 / H37Rv</strain>
    </source>
</reference>
<reference key="2">
    <citation type="journal article" date="2008" name="BMC Syst. Biol.">
        <title>targetTB: a target identification pipeline for Mycobacterium tuberculosis through an interactome, reactome and genome-scale structural analysis.</title>
        <authorList>
            <person name="Raman K."/>
            <person name="Yeturu K."/>
            <person name="Chandra N."/>
        </authorList>
    </citation>
    <scope>IDENTIFICATION AS A DRUG TARGET [LARGE SCALE ANALYSIS]</scope>
</reference>
<reference key="3">
    <citation type="journal article" date="2011" name="Mol. Cell. Proteomics">
        <title>Proteogenomic analysis of Mycobacterium tuberculosis by high resolution mass spectrometry.</title>
        <authorList>
            <person name="Kelkar D.S."/>
            <person name="Kumar D."/>
            <person name="Kumar P."/>
            <person name="Balakrishnan L."/>
            <person name="Muthusamy B."/>
            <person name="Yadav A.K."/>
            <person name="Shrivastava P."/>
            <person name="Marimuthu A."/>
            <person name="Anand S."/>
            <person name="Sundaram H."/>
            <person name="Kingsbury R."/>
            <person name="Harsha H.C."/>
            <person name="Nair B."/>
            <person name="Prasad T.S."/>
            <person name="Chauhan D.S."/>
            <person name="Katoch K."/>
            <person name="Katoch V.M."/>
            <person name="Kumar P."/>
            <person name="Chaerkady R."/>
            <person name="Ramachandran S."/>
            <person name="Dash D."/>
            <person name="Pandey A."/>
        </authorList>
    </citation>
    <scope>IDENTIFICATION BY MASS SPECTROMETRY [LARGE SCALE ANALYSIS]</scope>
    <source>
        <strain>ATCC 25618 / H37Rv</strain>
    </source>
</reference>
<organism>
    <name type="scientific">Mycobacterium tuberculosis (strain ATCC 25618 / H37Rv)</name>
    <dbReference type="NCBI Taxonomy" id="83332"/>
    <lineage>
        <taxon>Bacteria</taxon>
        <taxon>Bacillati</taxon>
        <taxon>Actinomycetota</taxon>
        <taxon>Actinomycetes</taxon>
        <taxon>Mycobacteriales</taxon>
        <taxon>Mycobacteriaceae</taxon>
        <taxon>Mycobacterium</taxon>
        <taxon>Mycobacterium tuberculosis complex</taxon>
    </lineage>
</organism>
<accession>P9WH01</accession>
<accession>L0TCK5</accession>
<accession>Q10793</accession>
<name>RNH2_MYCTU</name>
<comment type="function">
    <text evidence="1">Endonuclease that specifically degrades the RNA of RNA-DNA hybrids.</text>
</comment>
<comment type="catalytic activity">
    <reaction>
        <text>Endonucleolytic cleavage to 5'-phosphomonoester.</text>
        <dbReference type="EC" id="3.1.26.4"/>
    </reaction>
</comment>
<comment type="cofactor">
    <cofactor evidence="1">
        <name>Mn(2+)</name>
        <dbReference type="ChEBI" id="CHEBI:29035"/>
    </cofactor>
    <cofactor evidence="1">
        <name>Mg(2+)</name>
        <dbReference type="ChEBI" id="CHEBI:18420"/>
    </cofactor>
    <text evidence="1">Manganese or magnesium. Binds 1 divalent metal ion per monomer in the absence of substrate. May bind a second metal ion after substrate binding.</text>
</comment>
<comment type="subcellular location">
    <subcellularLocation>
        <location evidence="4">Cytoplasm</location>
    </subcellularLocation>
</comment>
<comment type="miscellaneous">
    <text>Was identified as a high-confidence drug target.</text>
</comment>
<comment type="similarity">
    <text evidence="4">Belongs to the RNase HII family.</text>
</comment>